<gene>
    <name type="primary">URA3</name>
</gene>
<protein>
    <recommendedName>
        <fullName>Orotidine 5'-phosphate decarboxylase</fullName>
        <ecNumber>4.1.1.23</ecNumber>
    </recommendedName>
    <alternativeName>
        <fullName>OMP decarboxylase</fullName>
        <shortName>OMPDCase</shortName>
        <shortName>OMPdecase</shortName>
    </alternativeName>
    <alternativeName>
        <fullName>Uridine 5'-monophosphate synthase</fullName>
        <shortName>UMP synthase</shortName>
    </alternativeName>
</protein>
<name>PYRF_KLUMA</name>
<sequence>MSTKSYSERAAAHRSPVAAKLLNLMEEKKSNLCASLDVRKTAELLRLVEVLGPYICLLKTHVDILEDFSFENTIVPLKQLAEKHKFLIFEDRKFADIGNTVKLQYTSGVYRIAEWSDITNAHGVTGAGIVAGLKQGAEEVTKEPRGLLMLAELSSKGSLAHGEYTRGTVEIAKSDKDFVIGFIAQNDMGGREEGYDWLIMTPGVGLDDKGDALGQQYRTVDEVVAGGSDIIIVGRGLFAKGRDPVVEGERYRKAGWDAYLKRVGRSA</sequence>
<organism>
    <name type="scientific">Kluyveromyces marxianus</name>
    <name type="common">Yeast</name>
    <name type="synonym">Candida kefyr</name>
    <dbReference type="NCBI Taxonomy" id="4911"/>
    <lineage>
        <taxon>Eukaryota</taxon>
        <taxon>Fungi</taxon>
        <taxon>Dikarya</taxon>
        <taxon>Ascomycota</taxon>
        <taxon>Saccharomycotina</taxon>
        <taxon>Saccharomycetes</taxon>
        <taxon>Saccharomycetales</taxon>
        <taxon>Saccharomycetaceae</taxon>
        <taxon>Kluyveromyces</taxon>
    </lineage>
</organism>
<evidence type="ECO:0000250" key="1"/>
<evidence type="ECO:0000255" key="2">
    <source>
        <dbReference type="PROSITE-ProRule" id="PRU10110"/>
    </source>
</evidence>
<evidence type="ECO:0000305" key="3"/>
<reference key="1">
    <citation type="journal article" date="1993" name="Yeast">
        <title>Cloning and sequencing of the URA3 gene of Kluyveromyces marxianus CBS 6556.</title>
        <authorList>
            <person name="Bergkamp R.J."/>
            <person name="Geerse R.H."/>
            <person name="Verbakel J.M."/>
            <person name="Planta R.J."/>
        </authorList>
    </citation>
    <scope>NUCLEOTIDE SEQUENCE [GENOMIC DNA]</scope>
    <source>
        <strain>ATCC 26548 / CBS 6556 / NRRL Y-7571</strain>
    </source>
</reference>
<keyword id="KW-0210">Decarboxylase</keyword>
<keyword id="KW-0456">Lyase</keyword>
<keyword id="KW-0665">Pyrimidine biosynthesis</keyword>
<dbReference type="EC" id="4.1.1.23"/>
<dbReference type="EMBL" id="Z21934">
    <property type="protein sequence ID" value="CAA79928.1"/>
    <property type="molecule type" value="Genomic_DNA"/>
</dbReference>
<dbReference type="PIR" id="S33964">
    <property type="entry name" value="S33964"/>
</dbReference>
<dbReference type="SMR" id="P41769"/>
<dbReference type="VEuPathDB" id="FungiDB:KLMA_10731"/>
<dbReference type="UniPathway" id="UPA00070">
    <property type="reaction ID" value="UER00120"/>
</dbReference>
<dbReference type="GO" id="GO:0005829">
    <property type="term" value="C:cytosol"/>
    <property type="evidence" value="ECO:0007669"/>
    <property type="project" value="TreeGrafter"/>
</dbReference>
<dbReference type="GO" id="GO:0004590">
    <property type="term" value="F:orotidine-5'-phosphate decarboxylase activity"/>
    <property type="evidence" value="ECO:0007669"/>
    <property type="project" value="UniProtKB-EC"/>
</dbReference>
<dbReference type="GO" id="GO:0006207">
    <property type="term" value="P:'de novo' pyrimidine nucleobase biosynthetic process"/>
    <property type="evidence" value="ECO:0007669"/>
    <property type="project" value="InterPro"/>
</dbReference>
<dbReference type="GO" id="GO:0044205">
    <property type="term" value="P:'de novo' UMP biosynthetic process"/>
    <property type="evidence" value="ECO:0007669"/>
    <property type="project" value="UniProtKB-UniPathway"/>
</dbReference>
<dbReference type="CDD" id="cd04725">
    <property type="entry name" value="OMP_decarboxylase_like"/>
    <property type="match status" value="1"/>
</dbReference>
<dbReference type="FunFam" id="3.20.20.70:FF:000114">
    <property type="entry name" value="Decarboxylase,orotidine phosphate"/>
    <property type="match status" value="1"/>
</dbReference>
<dbReference type="Gene3D" id="3.20.20.70">
    <property type="entry name" value="Aldolase class I"/>
    <property type="match status" value="1"/>
</dbReference>
<dbReference type="InterPro" id="IPR013785">
    <property type="entry name" value="Aldolase_TIM"/>
</dbReference>
<dbReference type="InterPro" id="IPR014732">
    <property type="entry name" value="OMPdecase"/>
</dbReference>
<dbReference type="InterPro" id="IPR018089">
    <property type="entry name" value="OMPdecase_AS"/>
</dbReference>
<dbReference type="InterPro" id="IPR001754">
    <property type="entry name" value="OMPdeCOase_dom"/>
</dbReference>
<dbReference type="InterPro" id="IPR011060">
    <property type="entry name" value="RibuloseP-bd_barrel"/>
</dbReference>
<dbReference type="NCBIfam" id="TIGR01740">
    <property type="entry name" value="pyrF"/>
    <property type="match status" value="1"/>
</dbReference>
<dbReference type="PANTHER" id="PTHR32119">
    <property type="entry name" value="OROTIDINE 5'-PHOSPHATE DECARBOXYLASE"/>
    <property type="match status" value="1"/>
</dbReference>
<dbReference type="PANTHER" id="PTHR32119:SF2">
    <property type="entry name" value="OROTIDINE 5'-PHOSPHATE DECARBOXYLASE"/>
    <property type="match status" value="1"/>
</dbReference>
<dbReference type="Pfam" id="PF00215">
    <property type="entry name" value="OMPdecase"/>
    <property type="match status" value="1"/>
</dbReference>
<dbReference type="SMART" id="SM00934">
    <property type="entry name" value="OMPdecase"/>
    <property type="match status" value="1"/>
</dbReference>
<dbReference type="SUPFAM" id="SSF51366">
    <property type="entry name" value="Ribulose-phoshate binding barrel"/>
    <property type="match status" value="1"/>
</dbReference>
<dbReference type="PROSITE" id="PS00156">
    <property type="entry name" value="OMPDECASE"/>
    <property type="match status" value="1"/>
</dbReference>
<comment type="catalytic activity">
    <reaction evidence="2">
        <text>orotidine 5'-phosphate + H(+) = UMP + CO2</text>
        <dbReference type="Rhea" id="RHEA:11596"/>
        <dbReference type="ChEBI" id="CHEBI:15378"/>
        <dbReference type="ChEBI" id="CHEBI:16526"/>
        <dbReference type="ChEBI" id="CHEBI:57538"/>
        <dbReference type="ChEBI" id="CHEBI:57865"/>
        <dbReference type="EC" id="4.1.1.23"/>
    </reaction>
</comment>
<comment type="pathway">
    <text>Pyrimidine metabolism; UMP biosynthesis via de novo pathway; UMP from orotate: step 2/2.</text>
</comment>
<comment type="similarity">
    <text evidence="3">Belongs to the OMP decarboxylase family.</text>
</comment>
<feature type="chain" id="PRO_0000134664" description="Orotidine 5'-phosphate decarboxylase">
    <location>
        <begin position="1"/>
        <end position="267"/>
    </location>
</feature>
<feature type="active site" description="Proton donor" evidence="2">
    <location>
        <position position="93"/>
    </location>
</feature>
<feature type="binding site" evidence="1">
    <location>
        <position position="37"/>
    </location>
    <ligand>
        <name>substrate</name>
    </ligand>
</feature>
<feature type="binding site" evidence="1">
    <location>
        <begin position="59"/>
        <end position="61"/>
    </location>
    <ligand>
        <name>substrate</name>
    </ligand>
</feature>
<feature type="binding site" evidence="1">
    <location>
        <begin position="91"/>
        <end position="100"/>
    </location>
    <ligand>
        <name>substrate</name>
    </ligand>
</feature>
<feature type="binding site" evidence="1">
    <location>
        <position position="217"/>
    </location>
    <ligand>
        <name>substrate</name>
    </ligand>
</feature>
<feature type="binding site" evidence="1">
    <location>
        <position position="235"/>
    </location>
    <ligand>
        <name>substrate</name>
    </ligand>
</feature>
<accession>P41769</accession>
<proteinExistence type="inferred from homology"/>